<organism>
    <name type="scientific">Escherichia coli O6:H1 (strain CFT073 / ATCC 700928 / UPEC)</name>
    <dbReference type="NCBI Taxonomy" id="199310"/>
    <lineage>
        <taxon>Bacteria</taxon>
        <taxon>Pseudomonadati</taxon>
        <taxon>Pseudomonadota</taxon>
        <taxon>Gammaproteobacteria</taxon>
        <taxon>Enterobacterales</taxon>
        <taxon>Enterobacteriaceae</taxon>
        <taxon>Escherichia</taxon>
    </lineage>
</organism>
<gene>
    <name type="primary">glcD</name>
    <name type="ordered locus">c3709</name>
</gene>
<keyword id="KW-0997">Cell inner membrane</keyword>
<keyword id="KW-1003">Cell membrane</keyword>
<keyword id="KW-0274">FAD</keyword>
<keyword id="KW-0285">Flavoprotein</keyword>
<keyword id="KW-0472">Membrane</keyword>
<keyword id="KW-0560">Oxidoreductase</keyword>
<keyword id="KW-1185">Reference proteome</keyword>
<dbReference type="EC" id="1.1.99.14" evidence="1"/>
<dbReference type="EMBL" id="AE014075">
    <property type="protein sequence ID" value="AAN82153.1"/>
    <property type="molecule type" value="Genomic_DNA"/>
</dbReference>
<dbReference type="RefSeq" id="WP_000026117.1">
    <property type="nucleotide sequence ID" value="NZ_CP051263.1"/>
</dbReference>
<dbReference type="SMR" id="P0AEQ0"/>
<dbReference type="STRING" id="199310.c3709"/>
<dbReference type="GeneID" id="75205189"/>
<dbReference type="KEGG" id="ecc:c3709"/>
<dbReference type="eggNOG" id="COG0277">
    <property type="taxonomic scope" value="Bacteria"/>
</dbReference>
<dbReference type="HOGENOM" id="CLU_017779_9_2_6"/>
<dbReference type="BioCyc" id="ECOL199310:C3709-MONOMER"/>
<dbReference type="Proteomes" id="UP000001410">
    <property type="component" value="Chromosome"/>
</dbReference>
<dbReference type="GO" id="GO:0009339">
    <property type="term" value="C:glycolate oxidase complex"/>
    <property type="evidence" value="ECO:0007669"/>
    <property type="project" value="InterPro"/>
</dbReference>
<dbReference type="GO" id="GO:0005886">
    <property type="term" value="C:plasma membrane"/>
    <property type="evidence" value="ECO:0007669"/>
    <property type="project" value="UniProtKB-SubCell"/>
</dbReference>
<dbReference type="GO" id="GO:0003973">
    <property type="term" value="F:(S)-2-hydroxy-acid oxidase activity"/>
    <property type="evidence" value="ECO:0007669"/>
    <property type="project" value="InterPro"/>
</dbReference>
<dbReference type="GO" id="GO:0047809">
    <property type="term" value="F:D-2-hydroxy-acid dehydrogenase activity"/>
    <property type="evidence" value="ECO:0007669"/>
    <property type="project" value="RHEA"/>
</dbReference>
<dbReference type="GO" id="GO:0071949">
    <property type="term" value="F:FAD binding"/>
    <property type="evidence" value="ECO:0007669"/>
    <property type="project" value="InterPro"/>
</dbReference>
<dbReference type="GO" id="GO:0019154">
    <property type="term" value="F:glycolate dehydrogenase activity"/>
    <property type="evidence" value="ECO:0007669"/>
    <property type="project" value="UniProtKB-EC"/>
</dbReference>
<dbReference type="Gene3D" id="3.30.465.10">
    <property type="match status" value="1"/>
</dbReference>
<dbReference type="Gene3D" id="3.30.70.2190">
    <property type="match status" value="1"/>
</dbReference>
<dbReference type="Gene3D" id="3.30.70.2740">
    <property type="match status" value="1"/>
</dbReference>
<dbReference type="Gene3D" id="3.30.43.10">
    <property type="entry name" value="Uridine Diphospho-n-acetylenolpyruvylglucosamine Reductase, domain 2"/>
    <property type="match status" value="1"/>
</dbReference>
<dbReference type="Gene3D" id="1.10.45.10">
    <property type="entry name" value="Vanillyl-alcohol Oxidase, Chain A, domain 4"/>
    <property type="match status" value="1"/>
</dbReference>
<dbReference type="InterPro" id="IPR004113">
    <property type="entry name" value="FAD-bd_oxidored_4_C"/>
</dbReference>
<dbReference type="InterPro" id="IPR016166">
    <property type="entry name" value="FAD-bd_PCMH"/>
</dbReference>
<dbReference type="InterPro" id="IPR036318">
    <property type="entry name" value="FAD-bd_PCMH-like_sf"/>
</dbReference>
<dbReference type="InterPro" id="IPR016167">
    <property type="entry name" value="FAD-bd_PCMH_sub1"/>
</dbReference>
<dbReference type="InterPro" id="IPR016169">
    <property type="entry name" value="FAD-bd_PCMH_sub2"/>
</dbReference>
<dbReference type="InterPro" id="IPR016164">
    <property type="entry name" value="FAD-linked_Oxase-like_C"/>
</dbReference>
<dbReference type="InterPro" id="IPR051914">
    <property type="entry name" value="FAD-linked_OxidoTrans_Type4"/>
</dbReference>
<dbReference type="InterPro" id="IPR004490">
    <property type="entry name" value="GlcD"/>
</dbReference>
<dbReference type="InterPro" id="IPR006094">
    <property type="entry name" value="Oxid_FAD_bind_N"/>
</dbReference>
<dbReference type="InterPro" id="IPR016171">
    <property type="entry name" value="Vanillyl_alc_oxidase_C-sub2"/>
</dbReference>
<dbReference type="NCBIfam" id="TIGR00387">
    <property type="entry name" value="glcD"/>
    <property type="match status" value="1"/>
</dbReference>
<dbReference type="NCBIfam" id="NF008408">
    <property type="entry name" value="PRK11230.1"/>
    <property type="match status" value="1"/>
</dbReference>
<dbReference type="PANTHER" id="PTHR42934">
    <property type="entry name" value="GLYCOLATE OXIDASE SUBUNIT GLCD"/>
    <property type="match status" value="1"/>
</dbReference>
<dbReference type="PANTHER" id="PTHR42934:SF1">
    <property type="entry name" value="GLYCOLATE OXIDASE SUBUNIT GLCD"/>
    <property type="match status" value="1"/>
</dbReference>
<dbReference type="Pfam" id="PF02913">
    <property type="entry name" value="FAD-oxidase_C"/>
    <property type="match status" value="1"/>
</dbReference>
<dbReference type="Pfam" id="PF01565">
    <property type="entry name" value="FAD_binding_4"/>
    <property type="match status" value="1"/>
</dbReference>
<dbReference type="SUPFAM" id="SSF56176">
    <property type="entry name" value="FAD-binding/transporter-associated domain-like"/>
    <property type="match status" value="1"/>
</dbReference>
<dbReference type="SUPFAM" id="SSF55103">
    <property type="entry name" value="FAD-linked oxidases, C-terminal domain"/>
    <property type="match status" value="1"/>
</dbReference>
<dbReference type="PROSITE" id="PS51387">
    <property type="entry name" value="FAD_PCMH"/>
    <property type="match status" value="1"/>
</dbReference>
<protein>
    <recommendedName>
        <fullName>Glycolate oxidase subunit GlcD</fullName>
        <ecNumber evidence="1">1.1.99.14</ecNumber>
    </recommendedName>
    <alternativeName>
        <fullName>Glycolate dehydrogenase subunit GlcD</fullName>
    </alternativeName>
</protein>
<evidence type="ECO:0000250" key="1">
    <source>
        <dbReference type="UniProtKB" id="P0AEP9"/>
    </source>
</evidence>
<evidence type="ECO:0000255" key="2">
    <source>
        <dbReference type="PROSITE-ProRule" id="PRU00718"/>
    </source>
</evidence>
<evidence type="ECO:0000305" key="3"/>
<comment type="function">
    <text evidence="1">Component of a complex that catalyzes the oxidation of glycolate to glyoxylate. Is required for E.coli to grow on glycolate as a sole source of carbon. Is also able to oxidize D-lactate ((R)-lactate) with a similar rate. Does not link directly to O(2), and 2,6-dichloroindophenol (DCIP) and phenazine methosulfate (PMS) can act as artificial electron acceptors in vitro, but the physiological molecule that functions as a primary electron acceptor during glycolate oxidation is unknown.</text>
</comment>
<comment type="catalytic activity">
    <reaction evidence="1">
        <text>glycolate + A = glyoxylate + AH2</text>
        <dbReference type="Rhea" id="RHEA:21264"/>
        <dbReference type="ChEBI" id="CHEBI:13193"/>
        <dbReference type="ChEBI" id="CHEBI:17499"/>
        <dbReference type="ChEBI" id="CHEBI:29805"/>
        <dbReference type="ChEBI" id="CHEBI:36655"/>
        <dbReference type="EC" id="1.1.99.14"/>
    </reaction>
    <physiologicalReaction direction="left-to-right" evidence="1">
        <dbReference type="Rhea" id="RHEA:21265"/>
    </physiologicalReaction>
</comment>
<comment type="catalytic activity">
    <reaction evidence="1">
        <text>(R)-lactate + A = pyruvate + AH2</text>
        <dbReference type="Rhea" id="RHEA:15089"/>
        <dbReference type="ChEBI" id="CHEBI:13193"/>
        <dbReference type="ChEBI" id="CHEBI:15361"/>
        <dbReference type="ChEBI" id="CHEBI:16004"/>
        <dbReference type="ChEBI" id="CHEBI:17499"/>
    </reaction>
</comment>
<comment type="cofactor">
    <cofactor evidence="3">
        <name>FAD</name>
        <dbReference type="ChEBI" id="CHEBI:57692"/>
    </cofactor>
</comment>
<comment type="subunit">
    <text evidence="1">The glycolate oxidase likely consists of three subunits, GlcD, GlcE and GlcF.</text>
</comment>
<comment type="subcellular location">
    <subcellularLocation>
        <location evidence="1">Cell inner membrane</location>
    </subcellularLocation>
    <text evidence="1">Glycolate oxidoreductase activity was shown to be firmly associated with the cytoplasmic membranes.</text>
</comment>
<comment type="similarity">
    <text evidence="3">Belongs to the FAD-binding oxidoreductase/transferase type 4 family.</text>
</comment>
<sequence>MSILYEERLDGALPDVDRTSVLMALREHVPGLEILHTDEEIIPYECDGLSAYRTRPLLVVLPKQMEQVTAILAVCHRLRVPVVTRGAGTGLSGGALPLEKGVLLVMARFKEILDINPVGRRARVQPGVRNLAISQAVAPHNLYYAPDPSSQIACSIGGNVAENAGGVHCLKYGLTVHNLLKIEVQTLDGEALTLGSDALDSPGFDLLALFTGSEGMLGVTTEVTVKLLPKPPVARVLLASFDSVEKAGLAVGDIIANGIIPGGLEMMDNLSIRAAEDFIHAGYPVDAEAILLCELDGVESDVQEDCERVNDILLKAGATDVRLAQDEAERVRFWAGRKNAFPAVGRISPDYYCMDGTIPRRALPGVLEGIARLSQQYDLRVANVFHAGDGNMHPLILFDANEPGEFARAEELGGKILELCVEVGGSISGEHGIGREKINQMCAQFNSDEITTFHAVKAAFDPDGLLNPGKNIPTLHRCAEFGAMHVHHGHLPFPELERF</sequence>
<accession>P0AEQ0</accession>
<accession>P52075</accession>
<name>GLCD_ECOL6</name>
<reference key="1">
    <citation type="journal article" date="2002" name="Proc. Natl. Acad. Sci. U.S.A.">
        <title>Extensive mosaic structure revealed by the complete genome sequence of uropathogenic Escherichia coli.</title>
        <authorList>
            <person name="Welch R.A."/>
            <person name="Burland V."/>
            <person name="Plunkett G. III"/>
            <person name="Redford P."/>
            <person name="Roesch P."/>
            <person name="Rasko D."/>
            <person name="Buckles E.L."/>
            <person name="Liou S.-R."/>
            <person name="Boutin A."/>
            <person name="Hackett J."/>
            <person name="Stroud D."/>
            <person name="Mayhew G.F."/>
            <person name="Rose D.J."/>
            <person name="Zhou S."/>
            <person name="Schwartz D.C."/>
            <person name="Perna N.T."/>
            <person name="Mobley H.L.T."/>
            <person name="Donnenberg M.S."/>
            <person name="Blattner F.R."/>
        </authorList>
    </citation>
    <scope>NUCLEOTIDE SEQUENCE [LARGE SCALE GENOMIC DNA]</scope>
    <source>
        <strain>CFT073 / ATCC 700928 / UPEC</strain>
    </source>
</reference>
<proteinExistence type="inferred from homology"/>
<feature type="chain" id="PRO_0000128182" description="Glycolate oxidase subunit GlcD">
    <location>
        <begin position="1"/>
        <end position="499"/>
    </location>
</feature>
<feature type="domain" description="FAD-binding PCMH-type" evidence="2">
    <location>
        <begin position="52"/>
        <end position="230"/>
    </location>
</feature>